<gene>
    <name evidence="6" type="primary">putP</name>
    <name type="ordered locus">STM1125</name>
</gene>
<sequence length="502" mass="54318">MAISTPMLVTFCVYIFGMILIGFIAWRSTKNFDDYILGGRSLGPFVTALSAGASDMSGWLLMGLPGAIFLSGISESWIAIGLTLGAWINWKLVAGRLRVHTEFNNNALTLPDYFTGRFEDKSRVLRIISALVILLFFTIYCASGIVAGARLFESTFGMSYETALWAGAAATIIYTFIGGFLAVSWTDTVQASLMIFALILTPVMVIVGVGGFSESLEVIKQKSIENVDMLKGLNFVAIISLMGWGLGYFGQPHILARFMAADSHHSIVHARRISMTWMILCLAGAVAVGFFGIAYFNNNPALAGAVNQNSERVFIELAQILFNPWIAGVLLSAILAAVMSTLSCQLLVCSSAITEDLYKAFLRKSASQQELVWVGRVMVLVVALIAIALAANPDNRVLGLVSYAWAGFGAAFGPVVLFSVMWSRMTRNGALAGMIIGAVTVIVWKQYGWLDLYEIIPGFIFGSLGIVIFSLLGKAPTAAMQERFAKADAHYHSAPPSKLQAE</sequence>
<organism>
    <name type="scientific">Salmonella typhimurium (strain LT2 / SGSC1412 / ATCC 700720)</name>
    <dbReference type="NCBI Taxonomy" id="99287"/>
    <lineage>
        <taxon>Bacteria</taxon>
        <taxon>Pseudomonadati</taxon>
        <taxon>Pseudomonadota</taxon>
        <taxon>Gammaproteobacteria</taxon>
        <taxon>Enterobacterales</taxon>
        <taxon>Enterobacteriaceae</taxon>
        <taxon>Salmonella</taxon>
    </lineage>
</organism>
<reference key="1">
    <citation type="journal article" date="1990" name="Nucleic Acids Res.">
        <title>DNA sequence of the putP gene from Salmonella typhimurium and predicted structure of proline permease.</title>
        <authorList>
            <person name="Miller K."/>
            <person name="Maloy S."/>
        </authorList>
    </citation>
    <scope>NUCLEOTIDE SEQUENCE [GENOMIC DNA]</scope>
    <source>
        <strain>LT2</strain>
    </source>
</reference>
<reference key="2">
    <citation type="submission" date="1990-11" db="EMBL/GenBank/DDBJ databases">
        <authorList>
            <person name="Miller K."/>
        </authorList>
    </citation>
    <scope>SEQUENCE REVISION</scope>
</reference>
<reference key="3">
    <citation type="journal article" date="2001" name="Nature">
        <title>Complete genome sequence of Salmonella enterica serovar Typhimurium LT2.</title>
        <authorList>
            <person name="McClelland M."/>
            <person name="Sanderson K.E."/>
            <person name="Spieth J."/>
            <person name="Clifton S.W."/>
            <person name="Latreille P."/>
            <person name="Courtney L."/>
            <person name="Porwollik S."/>
            <person name="Ali J."/>
            <person name="Dante M."/>
            <person name="Du F."/>
            <person name="Hou S."/>
            <person name="Layman D."/>
            <person name="Leonard S."/>
            <person name="Nguyen C."/>
            <person name="Scott K."/>
            <person name="Holmes A."/>
            <person name="Grewal N."/>
            <person name="Mulvaney E."/>
            <person name="Ryan E."/>
            <person name="Sun H."/>
            <person name="Florea L."/>
            <person name="Miller W."/>
            <person name="Stoneking T."/>
            <person name="Nhan M."/>
            <person name="Waterston R."/>
            <person name="Wilson R.K."/>
        </authorList>
    </citation>
    <scope>NUCLEOTIDE SEQUENCE [LARGE SCALE GENOMIC DNA]</scope>
    <source>
        <strain>LT2 / SGSC1412 / ATCC 700720</strain>
    </source>
</reference>
<reference key="4">
    <citation type="journal article" date="1988" name="Mol. Gen. Genet.">
        <title>Regulation of proline utilization in Salmonella typhimurium: molecular characterization of the put operon, and DNA sequence of the put control region.</title>
        <authorList>
            <person name="Hahn D.R."/>
            <person name="Myers R.S."/>
            <person name="Kent C.R."/>
            <person name="Maloy S.R."/>
        </authorList>
    </citation>
    <scope>NUCLEOTIDE SEQUENCE [GENOMIC DNA] OF 1-15</scope>
</reference>
<reference key="5">
    <citation type="journal article" date="1991" name="J. Bacteriol.">
        <title>Regulation of proline utilization in Salmonella typhimurium: a membrane-associated dehydrogenase binds DNA in vitro.</title>
        <authorList>
            <person name="Ostrovsky de Spicer P."/>
            <person name="O'Brien K."/>
            <person name="Maloy S."/>
        </authorList>
    </citation>
    <scope>NUCLEOTIDE SEQUENCE [GENOMIC DNA] OF 1-15</scope>
    <scope>INDUCTION</scope>
</reference>
<reference key="6">
    <citation type="journal article" date="1984" name="J. Bacteriol.">
        <title>Proline uptake through the major transport system of Salmonella typhimurium is coupled to sodium ions.</title>
        <authorList>
            <person name="Cairney J."/>
            <person name="Higgins C.F."/>
            <person name="Booth I.R."/>
        </authorList>
    </citation>
    <scope>FUNCTION</scope>
    <scope>CATALYTIC ACTIVITY</scope>
    <scope>BIOPHYSICOCHEMICAL PROPERTIES</scope>
</reference>
<feature type="chain" id="PRO_0000105401" description="Sodium/proline symporter">
    <location>
        <begin position="1"/>
        <end position="502"/>
    </location>
</feature>
<feature type="transmembrane region" description="Helical" evidence="3">
    <location>
        <begin position="6"/>
        <end position="26"/>
    </location>
</feature>
<feature type="transmembrane region" description="Helical" evidence="3">
    <location>
        <begin position="42"/>
        <end position="62"/>
    </location>
</feature>
<feature type="transmembrane region" description="Helical" evidence="3">
    <location>
        <begin position="68"/>
        <end position="88"/>
    </location>
</feature>
<feature type="transmembrane region" description="Helical" evidence="3">
    <location>
        <begin position="127"/>
        <end position="147"/>
    </location>
</feature>
<feature type="transmembrane region" description="Helical" evidence="3">
    <location>
        <begin position="163"/>
        <end position="183"/>
    </location>
</feature>
<feature type="transmembrane region" description="Helical" evidence="3">
    <location>
        <begin position="192"/>
        <end position="212"/>
    </location>
</feature>
<feature type="transmembrane region" description="Helical" evidence="3">
    <location>
        <begin position="235"/>
        <end position="255"/>
    </location>
</feature>
<feature type="transmembrane region" description="Helical" evidence="3">
    <location>
        <begin position="276"/>
        <end position="296"/>
    </location>
</feature>
<feature type="transmembrane region" description="Helical" evidence="3">
    <location>
        <begin position="320"/>
        <end position="340"/>
    </location>
</feature>
<feature type="transmembrane region" description="Helical" evidence="3">
    <location>
        <begin position="371"/>
        <end position="391"/>
    </location>
</feature>
<feature type="transmembrane region" description="Helical" evidence="3">
    <location>
        <begin position="398"/>
        <end position="418"/>
    </location>
</feature>
<feature type="transmembrane region" description="Helical" evidence="3">
    <location>
        <begin position="430"/>
        <end position="450"/>
    </location>
</feature>
<feature type="transmembrane region" description="Helical" evidence="3">
    <location>
        <begin position="452"/>
        <end position="472"/>
    </location>
</feature>
<feature type="site" description="Involved in high-affinity binding for sodium and proline" evidence="1">
    <location>
        <position position="344"/>
    </location>
</feature>
<evidence type="ECO:0000250" key="1"/>
<evidence type="ECO:0000250" key="2">
    <source>
        <dbReference type="UniProtKB" id="P07117"/>
    </source>
</evidence>
<evidence type="ECO:0000255" key="3"/>
<evidence type="ECO:0000269" key="4">
    <source>
    </source>
</evidence>
<evidence type="ECO:0000269" key="5">
    <source>
    </source>
</evidence>
<evidence type="ECO:0000303" key="6">
    <source>
    </source>
</evidence>
<evidence type="ECO:0000305" key="7"/>
<dbReference type="EMBL" id="X52573">
    <property type="protein sequence ID" value="CAA36802.1"/>
    <property type="molecule type" value="Genomic_DNA"/>
</dbReference>
<dbReference type="EMBL" id="AE006468">
    <property type="protein sequence ID" value="AAL20056.1"/>
    <property type="molecule type" value="Genomic_DNA"/>
</dbReference>
<dbReference type="EMBL" id="X12569">
    <property type="protein sequence ID" value="CAA31080.1"/>
    <property type="molecule type" value="Genomic_DNA"/>
</dbReference>
<dbReference type="PIR" id="S10220">
    <property type="entry name" value="S10220"/>
</dbReference>
<dbReference type="RefSeq" id="NP_460097.1">
    <property type="nucleotide sequence ID" value="NC_003197.2"/>
</dbReference>
<dbReference type="RefSeq" id="WP_001018467.1">
    <property type="nucleotide sequence ID" value="NC_003197.2"/>
</dbReference>
<dbReference type="SMR" id="P10502"/>
<dbReference type="STRING" id="99287.STM1125"/>
<dbReference type="PaxDb" id="99287-STM1125"/>
<dbReference type="GeneID" id="1252643"/>
<dbReference type="KEGG" id="stm:STM1125"/>
<dbReference type="PATRIC" id="fig|99287.12.peg.1192"/>
<dbReference type="HOGENOM" id="CLU_018808_15_2_6"/>
<dbReference type="OMA" id="NWVFVAK"/>
<dbReference type="PhylomeDB" id="P10502"/>
<dbReference type="BioCyc" id="SENT99287:STM1125-MONOMER"/>
<dbReference type="Proteomes" id="UP000001014">
    <property type="component" value="Chromosome"/>
</dbReference>
<dbReference type="GO" id="GO:0005886">
    <property type="term" value="C:plasma membrane"/>
    <property type="evidence" value="ECO:0000318"/>
    <property type="project" value="GO_Central"/>
</dbReference>
<dbReference type="GO" id="GO:0015193">
    <property type="term" value="F:L-proline transmembrane transporter activity"/>
    <property type="evidence" value="ECO:0000318"/>
    <property type="project" value="GO_Central"/>
</dbReference>
<dbReference type="GO" id="GO:0005298">
    <property type="term" value="F:proline:sodium symporter activity"/>
    <property type="evidence" value="ECO:0000318"/>
    <property type="project" value="GO_Central"/>
</dbReference>
<dbReference type="GO" id="GO:0031402">
    <property type="term" value="F:sodium ion binding"/>
    <property type="evidence" value="ECO:0007669"/>
    <property type="project" value="InterPro"/>
</dbReference>
<dbReference type="GO" id="GO:0071235">
    <property type="term" value="P:cellular response to proline"/>
    <property type="evidence" value="ECO:0000314"/>
    <property type="project" value="UniProtKB"/>
</dbReference>
<dbReference type="GO" id="GO:0015824">
    <property type="term" value="P:proline transport"/>
    <property type="evidence" value="ECO:0000314"/>
    <property type="project" value="UniProtKB"/>
</dbReference>
<dbReference type="GO" id="GO:0055085">
    <property type="term" value="P:transmembrane transport"/>
    <property type="evidence" value="ECO:0000318"/>
    <property type="project" value="GO_Central"/>
</dbReference>
<dbReference type="CDD" id="cd11475">
    <property type="entry name" value="SLC5sbd_PutP"/>
    <property type="match status" value="1"/>
</dbReference>
<dbReference type="FunFam" id="1.20.1730.10:FF:000002">
    <property type="entry name" value="Sodium/proline symporter"/>
    <property type="match status" value="1"/>
</dbReference>
<dbReference type="Gene3D" id="1.20.1730.10">
    <property type="entry name" value="Sodium/glucose cotransporter"/>
    <property type="match status" value="1"/>
</dbReference>
<dbReference type="InterPro" id="IPR038377">
    <property type="entry name" value="Na/Glc_symporter_sf"/>
</dbReference>
<dbReference type="InterPro" id="IPR011851">
    <property type="entry name" value="Na/Pro_symporter"/>
</dbReference>
<dbReference type="InterPro" id="IPR001734">
    <property type="entry name" value="Na/solute_symporter"/>
</dbReference>
<dbReference type="InterPro" id="IPR018212">
    <property type="entry name" value="Na/solute_symporter_CS"/>
</dbReference>
<dbReference type="InterPro" id="IPR050277">
    <property type="entry name" value="Sodium:Solute_Symporter"/>
</dbReference>
<dbReference type="NCBIfam" id="TIGR02121">
    <property type="entry name" value="Na_Pro_sym"/>
    <property type="match status" value="1"/>
</dbReference>
<dbReference type="NCBIfam" id="NF011948">
    <property type="entry name" value="PRK15419.1"/>
    <property type="match status" value="1"/>
</dbReference>
<dbReference type="NCBIfam" id="TIGR00813">
    <property type="entry name" value="sss"/>
    <property type="match status" value="1"/>
</dbReference>
<dbReference type="PANTHER" id="PTHR48086">
    <property type="entry name" value="SODIUM/PROLINE SYMPORTER-RELATED"/>
    <property type="match status" value="1"/>
</dbReference>
<dbReference type="PANTHER" id="PTHR48086:SF3">
    <property type="entry name" value="SODIUM_PROLINE SYMPORTER"/>
    <property type="match status" value="1"/>
</dbReference>
<dbReference type="Pfam" id="PF00474">
    <property type="entry name" value="SSF"/>
    <property type="match status" value="1"/>
</dbReference>
<dbReference type="PROSITE" id="PS00456">
    <property type="entry name" value="NA_SOLUT_SYMP_1"/>
    <property type="match status" value="1"/>
</dbReference>
<dbReference type="PROSITE" id="PS00457">
    <property type="entry name" value="NA_SOLUT_SYMP_2"/>
    <property type="match status" value="1"/>
</dbReference>
<dbReference type="PROSITE" id="PS50283">
    <property type="entry name" value="NA_SOLUT_SYMP_3"/>
    <property type="match status" value="1"/>
</dbReference>
<proteinExistence type="evidence at protein level"/>
<name>PUTP_SALTY</name>
<protein>
    <recommendedName>
        <fullName evidence="7">Sodium/proline symporter</fullName>
    </recommendedName>
    <alternativeName>
        <fullName>Proline permease</fullName>
    </alternativeName>
</protein>
<comment type="function">
    <text evidence="5">Catalyzes the sodium-dependent uptake of extracellular L-proline.</text>
</comment>
<comment type="catalytic activity">
    <reaction evidence="5">
        <text>L-proline(in) + Na(+)(in) = L-proline(out) + Na(+)(out)</text>
        <dbReference type="Rhea" id="RHEA:28967"/>
        <dbReference type="ChEBI" id="CHEBI:29101"/>
        <dbReference type="ChEBI" id="CHEBI:60039"/>
    </reaction>
</comment>
<comment type="biophysicochemical properties">
    <kinetics>
        <KM evidence="5">3.6 uM for proline (in the presence of 0.1 mM Na(+))</KM>
        <KM evidence="5">3.4 uM for proline (in the presence of 10 mM Na(+))</KM>
        <Vmax evidence="5">0.7 nmol/min/mg enzyme (in the presence of 0.1 mM Na(+))</Vmax>
        <Vmax evidence="5">4.6 nmol/min/mg enzyme (in the presence of 10 mM Na(+))</Vmax>
    </kinetics>
</comment>
<comment type="subcellular location">
    <subcellularLocation>
        <location evidence="2">Cell inner membrane</location>
        <topology evidence="3">Multi-pass membrane protein</topology>
    </subcellularLocation>
</comment>
<comment type="induction">
    <text evidence="4">Expression may be repressed by PutA in the absence of proline.</text>
</comment>
<comment type="similarity">
    <text evidence="7">Belongs to the sodium:solute symporter (SSF) (TC 2.A.21) family.</text>
</comment>
<accession>P10502</accession>
<keyword id="KW-0029">Amino-acid transport</keyword>
<keyword id="KW-0997">Cell inner membrane</keyword>
<keyword id="KW-1003">Cell membrane</keyword>
<keyword id="KW-0406">Ion transport</keyword>
<keyword id="KW-0472">Membrane</keyword>
<keyword id="KW-1185">Reference proteome</keyword>
<keyword id="KW-0915">Sodium</keyword>
<keyword id="KW-0739">Sodium transport</keyword>
<keyword id="KW-0769">Symport</keyword>
<keyword id="KW-0812">Transmembrane</keyword>
<keyword id="KW-1133">Transmembrane helix</keyword>
<keyword id="KW-0813">Transport</keyword>